<feature type="signal peptide" evidence="2">
    <location>
        <begin position="1"/>
        <end position="30"/>
    </location>
</feature>
<feature type="chain" id="PRO_0000429485" description="Probable outer membrane usher protein LpfC">
    <location>
        <begin position="31"/>
        <end position="367"/>
    </location>
</feature>
<sequence length="367" mass="40298">MSRKTVSRTFSSFSISVVAVAVASTFSAHAGKFNPKFLEDVQGVGQHVDLTMFEKGQEQQLPGIYRVSVYVNEQRMETRTLEFKEATEAQRKAMGESLVPCLSRTQLAEMGVRVESFPALNLVSAEACVPFDEIIPLASSHFDFSEQKLVLSFPQAAMHQVARGTVPESLWDEGIPALLLDYSFSGSNSEYDSTGSSSSYVDDNGTVHHDDGKDTLKSDSYYLNLRSGLNLGAWRLRNYSTWSHSGGKAQWDNIGTSLSRAIIPFKAQLTMGDTATAGDIFDSVQMRGAMLASDEEMLPDSQRGFAPIVRGIAKSNAEVSIEQNGYVIYRTYVQPGAFEINDLYPTANSGDLTVIIKEADGSEQRFI</sequence>
<proteinExistence type="evidence at transcript level"/>
<protein>
    <recommendedName>
        <fullName>Probable outer membrane usher protein LpfC</fullName>
    </recommendedName>
</protein>
<comment type="function">
    <text evidence="3">Part of the lpfABCC'DE fimbrial operon. LP fimbriae may participate in the interaction with eukaryotic cells by assisting in microcolony formation. Could be involved in the export and assembly of the fimbrial subunits across the outer membrane.</text>
</comment>
<comment type="subcellular location">
    <subcellularLocation>
        <location evidence="1">Cell outer membrane</location>
        <topology evidence="1">Multi-pass membrane protein</topology>
    </subcellularLocation>
</comment>
<comment type="induction">
    <text evidence="3">Induced during the exponential growth phase.</text>
</comment>
<comment type="similarity">
    <text evidence="4">Belongs to the fimbrial export usher family.</text>
</comment>
<name>LPFC_ECO57</name>
<reference key="1">
    <citation type="journal article" date="2001" name="DNA Res.">
        <title>Complete genome sequence of enterohemorrhagic Escherichia coli O157:H7 and genomic comparison with a laboratory strain K-12.</title>
        <authorList>
            <person name="Hayashi T."/>
            <person name="Makino K."/>
            <person name="Ohnishi M."/>
            <person name="Kurokawa K."/>
            <person name="Ishii K."/>
            <person name="Yokoyama K."/>
            <person name="Han C.-G."/>
            <person name="Ohtsubo E."/>
            <person name="Nakayama K."/>
            <person name="Murata T."/>
            <person name="Tanaka M."/>
            <person name="Tobe T."/>
            <person name="Iida T."/>
            <person name="Takami H."/>
            <person name="Honda T."/>
            <person name="Sasakawa C."/>
            <person name="Ogasawara N."/>
            <person name="Yasunaga T."/>
            <person name="Kuhara S."/>
            <person name="Shiba T."/>
            <person name="Hattori M."/>
            <person name="Shinagawa H."/>
        </authorList>
    </citation>
    <scope>NUCLEOTIDE SEQUENCE [LARGE SCALE GENOMIC DNA]</scope>
    <source>
        <strain>O157:H7 / Sakai / RIMD 0509952 / EHEC</strain>
    </source>
</reference>
<reference key="2">
    <citation type="journal article" date="2001" name="Nature">
        <title>Genome sequence of enterohaemorrhagic Escherichia coli O157:H7.</title>
        <authorList>
            <person name="Perna N.T."/>
            <person name="Plunkett G. III"/>
            <person name="Burland V."/>
            <person name="Mau B."/>
            <person name="Glasner J.D."/>
            <person name="Rose D.J."/>
            <person name="Mayhew G.F."/>
            <person name="Evans P.S."/>
            <person name="Gregor J."/>
            <person name="Kirkpatrick H.A."/>
            <person name="Posfai G."/>
            <person name="Hackett J."/>
            <person name="Klink S."/>
            <person name="Boutin A."/>
            <person name="Shao Y."/>
            <person name="Miller L."/>
            <person name="Grotbeck E.J."/>
            <person name="Davis N.W."/>
            <person name="Lim A."/>
            <person name="Dimalanta E.T."/>
            <person name="Potamousis K."/>
            <person name="Apodaca J."/>
            <person name="Anantharaman T.S."/>
            <person name="Lin J."/>
            <person name="Yen G."/>
            <person name="Schwartz D.C."/>
            <person name="Welch R.A."/>
            <person name="Blattner F.R."/>
        </authorList>
    </citation>
    <scope>NUCLEOTIDE SEQUENCE [LARGE SCALE GENOMIC DNA]</scope>
    <source>
        <strain>O157:H7 / EDL933 / ATCC 700927 / EHEC</strain>
    </source>
</reference>
<reference key="3">
    <citation type="journal article" date="2002" name="Infect. Immun.">
        <title>Identification and characterization of lpfABCC'DE, a fimbrial operon of enterohemorrhagic Escherichia coli O157:H7.</title>
        <authorList>
            <person name="Torres A.G."/>
            <person name="Giron J.A."/>
            <person name="Perna N.T."/>
            <person name="Burland V."/>
            <person name="Blattner F.R."/>
            <person name="Avelino-Flores F."/>
            <person name="Kaper J.B."/>
        </authorList>
    </citation>
    <scope>FUNCTION</scope>
    <scope>INDUCTION</scope>
    <scope>GENE NAME</scope>
    <source>
        <strain>O157:H7 / EDL933 / ATCC 700927 / EHEC</strain>
    </source>
</reference>
<organism>
    <name type="scientific">Escherichia coli O157:H7</name>
    <dbReference type="NCBI Taxonomy" id="83334"/>
    <lineage>
        <taxon>Bacteria</taxon>
        <taxon>Pseudomonadati</taxon>
        <taxon>Pseudomonadota</taxon>
        <taxon>Gammaproteobacteria</taxon>
        <taxon>Enterobacterales</taxon>
        <taxon>Enterobacteriaceae</taxon>
        <taxon>Escherichia</taxon>
    </lineage>
</organism>
<dbReference type="EMBL" id="AE005174">
    <property type="protein sequence ID" value="AAG58693.1"/>
    <property type="molecule type" value="Genomic_DNA"/>
</dbReference>
<dbReference type="EMBL" id="BA000007">
    <property type="protein sequence ID" value="BAB37852.1"/>
    <property type="molecule type" value="Genomic_DNA"/>
</dbReference>
<dbReference type="PIR" id="A86029">
    <property type="entry name" value="A86029"/>
</dbReference>
<dbReference type="PIR" id="E91182">
    <property type="entry name" value="E91182"/>
</dbReference>
<dbReference type="SMR" id="Q8X5K7"/>
<dbReference type="STRING" id="155864.Z4968"/>
<dbReference type="KEGG" id="ece:Z4968"/>
<dbReference type="HOGENOM" id="CLU_009120_0_0_6"/>
<dbReference type="OMA" id="LCLTESW"/>
<dbReference type="Proteomes" id="UP000000558">
    <property type="component" value="Chromosome"/>
</dbReference>
<dbReference type="Proteomes" id="UP000002519">
    <property type="component" value="Chromosome"/>
</dbReference>
<dbReference type="GO" id="GO:0009279">
    <property type="term" value="C:cell outer membrane"/>
    <property type="evidence" value="ECO:0007669"/>
    <property type="project" value="UniProtKB-SubCell"/>
</dbReference>
<dbReference type="GO" id="GO:0015473">
    <property type="term" value="F:fimbrial usher porin activity"/>
    <property type="evidence" value="ECO:0007669"/>
    <property type="project" value="InterPro"/>
</dbReference>
<dbReference type="GO" id="GO:0009297">
    <property type="term" value="P:pilus assembly"/>
    <property type="evidence" value="ECO:0007669"/>
    <property type="project" value="InterPro"/>
</dbReference>
<dbReference type="FunFam" id="3.10.20.410:FF:000001">
    <property type="entry name" value="Fimbrial outer membrane usher protein"/>
    <property type="match status" value="1"/>
</dbReference>
<dbReference type="FunFam" id="2.60.40.3110:FF:000001">
    <property type="entry name" value="Putative fimbrial outer membrane usher"/>
    <property type="match status" value="1"/>
</dbReference>
<dbReference type="Gene3D" id="2.60.40.3110">
    <property type="match status" value="1"/>
</dbReference>
<dbReference type="Gene3D" id="3.10.20.410">
    <property type="match status" value="1"/>
</dbReference>
<dbReference type="InterPro" id="IPR000015">
    <property type="entry name" value="Fimb_usher"/>
</dbReference>
<dbReference type="InterPro" id="IPR018030">
    <property type="entry name" value="Fimbrial_membr_usher_CS"/>
</dbReference>
<dbReference type="InterPro" id="IPR025885">
    <property type="entry name" value="PapC_N"/>
</dbReference>
<dbReference type="InterPro" id="IPR037224">
    <property type="entry name" value="PapC_N_sf"/>
</dbReference>
<dbReference type="PANTHER" id="PTHR30451:SF21">
    <property type="entry name" value="FIMBRIAL USHER DOMAIN-CONTAINING PROTEIN YDET-RELATED"/>
    <property type="match status" value="1"/>
</dbReference>
<dbReference type="PANTHER" id="PTHR30451">
    <property type="entry name" value="OUTER MEMBRANE USHER PROTEIN"/>
    <property type="match status" value="1"/>
</dbReference>
<dbReference type="Pfam" id="PF13954">
    <property type="entry name" value="PapC_N"/>
    <property type="match status" value="1"/>
</dbReference>
<dbReference type="Pfam" id="PF00577">
    <property type="entry name" value="Usher"/>
    <property type="match status" value="1"/>
</dbReference>
<dbReference type="SUPFAM" id="SSF141729">
    <property type="entry name" value="FimD N-terminal domain-like"/>
    <property type="match status" value="1"/>
</dbReference>
<dbReference type="PROSITE" id="PS01151">
    <property type="entry name" value="FIMBRIAL_USHER"/>
    <property type="match status" value="1"/>
</dbReference>
<evidence type="ECO:0000250" key="1"/>
<evidence type="ECO:0000255" key="2"/>
<evidence type="ECO:0000269" key="3">
    <source>
    </source>
</evidence>
<evidence type="ECO:0000305" key="4"/>
<gene>
    <name type="primary">lpfC</name>
    <name type="ordered locus">Z4968</name>
    <name type="ordered locus">ECs4429</name>
</gene>
<keyword id="KW-0998">Cell outer membrane</keyword>
<keyword id="KW-1029">Fimbrium biogenesis</keyword>
<keyword id="KW-0472">Membrane</keyword>
<keyword id="KW-1185">Reference proteome</keyword>
<keyword id="KW-0732">Signal</keyword>
<keyword id="KW-0812">Transmembrane</keyword>
<keyword id="KW-0813">Transport</keyword>
<accession>Q8X5K7</accession>
<accession>Q7A9Y7</accession>